<proteinExistence type="inferred from homology"/>
<comment type="subcellular location">
    <subcellularLocation>
        <location evidence="1">Cell inner membrane</location>
        <topology evidence="1">Multi-pass membrane protein</topology>
    </subcellularLocation>
</comment>
<comment type="similarity">
    <text evidence="3">Belongs to the major facilitator superfamily. TsgA family.</text>
</comment>
<protein>
    <recommendedName>
        <fullName>Protein TsgA</fullName>
    </recommendedName>
</protein>
<reference key="1">
    <citation type="journal article" date="2001" name="Nature">
        <title>Complete genome sequence of a multiple drug resistant Salmonella enterica serovar Typhi CT18.</title>
        <authorList>
            <person name="Parkhill J."/>
            <person name="Dougan G."/>
            <person name="James K.D."/>
            <person name="Thomson N.R."/>
            <person name="Pickard D."/>
            <person name="Wain J."/>
            <person name="Churcher C.M."/>
            <person name="Mungall K.L."/>
            <person name="Bentley S.D."/>
            <person name="Holden M.T.G."/>
            <person name="Sebaihia M."/>
            <person name="Baker S."/>
            <person name="Basham D."/>
            <person name="Brooks K."/>
            <person name="Chillingworth T."/>
            <person name="Connerton P."/>
            <person name="Cronin A."/>
            <person name="Davis P."/>
            <person name="Davies R.M."/>
            <person name="Dowd L."/>
            <person name="White N."/>
            <person name="Farrar J."/>
            <person name="Feltwell T."/>
            <person name="Hamlin N."/>
            <person name="Haque A."/>
            <person name="Hien T.T."/>
            <person name="Holroyd S."/>
            <person name="Jagels K."/>
            <person name="Krogh A."/>
            <person name="Larsen T.S."/>
            <person name="Leather S."/>
            <person name="Moule S."/>
            <person name="O'Gaora P."/>
            <person name="Parry C."/>
            <person name="Quail M.A."/>
            <person name="Rutherford K.M."/>
            <person name="Simmonds M."/>
            <person name="Skelton J."/>
            <person name="Stevens K."/>
            <person name="Whitehead S."/>
            <person name="Barrell B.G."/>
        </authorList>
    </citation>
    <scope>NUCLEOTIDE SEQUENCE [LARGE SCALE GENOMIC DNA]</scope>
    <source>
        <strain>CT18</strain>
    </source>
</reference>
<reference key="2">
    <citation type="journal article" date="2003" name="J. Bacteriol.">
        <title>Comparative genomics of Salmonella enterica serovar Typhi strains Ty2 and CT18.</title>
        <authorList>
            <person name="Deng W."/>
            <person name="Liou S.-R."/>
            <person name="Plunkett G. III"/>
            <person name="Mayhew G.F."/>
            <person name="Rose D.J."/>
            <person name="Burland V."/>
            <person name="Kodoyianni V."/>
            <person name="Schwartz D.C."/>
            <person name="Blattner F.R."/>
        </authorList>
    </citation>
    <scope>NUCLEOTIDE SEQUENCE [LARGE SCALE GENOMIC DNA]</scope>
    <source>
        <strain>ATCC 700931 / Ty2</strain>
    </source>
</reference>
<sequence length="393" mass="43137">MTNSNRIKLTWISFLSYALTGALVIVTGMVMGNIADYFQLPVSSMSNTFTFLNAGILISIFLNAWLMEIVPLKTQLRFGFILMVLAVAGLMFSHSLALFSAAMFVLGLVSGITMSIGTFLITQLYEGRQRGSRLLFTDSFFSMAGMIFPMVAAFLLARSIEWYWVYACIGLVYLAIFILTFGCEFPALGKHAQHSQAPVVKEKWGIGVLFLAVAALCYILGQLGFISWVPEYAKGLGMSLNDAGALVSDFWMSYMFGMWAFSFILRFFDLQRILTVLAGMAAILMYLFITGTQAHMPWFILTLGFFSSAIYTSIITLGSQQTKVASPKLVNFILTCGTIGTMLTFVVTGPIVAHSGPQAALLTANGLYAVVFVMCFALGFVSRHRQHSSPAAH</sequence>
<evidence type="ECO:0000250" key="1"/>
<evidence type="ECO:0000255" key="2"/>
<evidence type="ECO:0000305" key="3"/>
<organism>
    <name type="scientific">Salmonella typhi</name>
    <dbReference type="NCBI Taxonomy" id="90370"/>
    <lineage>
        <taxon>Bacteria</taxon>
        <taxon>Pseudomonadati</taxon>
        <taxon>Pseudomonadota</taxon>
        <taxon>Gammaproteobacteria</taxon>
        <taxon>Enterobacterales</taxon>
        <taxon>Enterobacteriaceae</taxon>
        <taxon>Salmonella</taxon>
    </lineage>
</organism>
<accession>Q8Z1Z8</accession>
<keyword id="KW-0997">Cell inner membrane</keyword>
<keyword id="KW-1003">Cell membrane</keyword>
<keyword id="KW-0472">Membrane</keyword>
<keyword id="KW-0812">Transmembrane</keyword>
<keyword id="KW-1133">Transmembrane helix</keyword>
<gene>
    <name type="primary">tsgA</name>
    <name type="ordered locus">STY4323</name>
    <name type="ordered locus">t4032</name>
</gene>
<name>TSGA_SALTI</name>
<dbReference type="EMBL" id="AL513382">
    <property type="protein sequence ID" value="CAD08140.1"/>
    <property type="molecule type" value="Genomic_DNA"/>
</dbReference>
<dbReference type="EMBL" id="AE014613">
    <property type="protein sequence ID" value="AAO71501.1"/>
    <property type="molecule type" value="Genomic_DNA"/>
</dbReference>
<dbReference type="RefSeq" id="NP_458429.1">
    <property type="nucleotide sequence ID" value="NC_003198.1"/>
</dbReference>
<dbReference type="RefSeq" id="WP_000185273.1">
    <property type="nucleotide sequence ID" value="NZ_WSUR01000001.1"/>
</dbReference>
<dbReference type="SMR" id="Q8Z1Z8"/>
<dbReference type="STRING" id="220341.gene:17588153"/>
<dbReference type="KEGG" id="stt:t4032"/>
<dbReference type="KEGG" id="sty:STY4323"/>
<dbReference type="PATRIC" id="fig|220341.7.peg.4418"/>
<dbReference type="eggNOG" id="COG0738">
    <property type="taxonomic scope" value="Bacteria"/>
</dbReference>
<dbReference type="HOGENOM" id="CLU_056916_0_0_6"/>
<dbReference type="OMA" id="FIVTGPI"/>
<dbReference type="OrthoDB" id="8577032at2"/>
<dbReference type="Proteomes" id="UP000000541">
    <property type="component" value="Chromosome"/>
</dbReference>
<dbReference type="Proteomes" id="UP000002670">
    <property type="component" value="Chromosome"/>
</dbReference>
<dbReference type="GO" id="GO:0005886">
    <property type="term" value="C:plasma membrane"/>
    <property type="evidence" value="ECO:0007669"/>
    <property type="project" value="UniProtKB-SubCell"/>
</dbReference>
<dbReference type="GO" id="GO:0022857">
    <property type="term" value="F:transmembrane transporter activity"/>
    <property type="evidence" value="ECO:0007669"/>
    <property type="project" value="InterPro"/>
</dbReference>
<dbReference type="FunFam" id="1.20.1250.20:FF:000032">
    <property type="entry name" value="Protein TsgA"/>
    <property type="match status" value="1"/>
</dbReference>
<dbReference type="FunFam" id="1.20.1250.20:FF:000052">
    <property type="entry name" value="Protein TsgA"/>
    <property type="match status" value="1"/>
</dbReference>
<dbReference type="Gene3D" id="1.20.1250.20">
    <property type="entry name" value="MFS general substrate transporter like domains"/>
    <property type="match status" value="2"/>
</dbReference>
<dbReference type="HAMAP" id="MF_01044">
    <property type="entry name" value="MFS_TsgA"/>
    <property type="match status" value="1"/>
</dbReference>
<dbReference type="InterPro" id="IPR011701">
    <property type="entry name" value="MFS"/>
</dbReference>
<dbReference type="InterPro" id="IPR020846">
    <property type="entry name" value="MFS_dom"/>
</dbReference>
<dbReference type="InterPro" id="IPR036259">
    <property type="entry name" value="MFS_trans_sf"/>
</dbReference>
<dbReference type="InterPro" id="IPR023528">
    <property type="entry name" value="MFS_TsgA"/>
</dbReference>
<dbReference type="InterPro" id="IPR050375">
    <property type="entry name" value="MFS_TsgA-like"/>
</dbReference>
<dbReference type="NCBIfam" id="NF002982">
    <property type="entry name" value="PRK03699.1"/>
    <property type="match status" value="1"/>
</dbReference>
<dbReference type="PANTHER" id="PTHR43702">
    <property type="entry name" value="L-FUCOSE-PROTON SYMPORTER"/>
    <property type="match status" value="1"/>
</dbReference>
<dbReference type="PANTHER" id="PTHR43702:SF3">
    <property type="entry name" value="PROTEIN TSGA"/>
    <property type="match status" value="1"/>
</dbReference>
<dbReference type="Pfam" id="PF07690">
    <property type="entry name" value="MFS_1"/>
    <property type="match status" value="1"/>
</dbReference>
<dbReference type="SUPFAM" id="SSF103473">
    <property type="entry name" value="MFS general substrate transporter"/>
    <property type="match status" value="1"/>
</dbReference>
<dbReference type="PROSITE" id="PS50850">
    <property type="entry name" value="MFS"/>
    <property type="match status" value="1"/>
</dbReference>
<feature type="chain" id="PRO_0000206499" description="Protein TsgA">
    <location>
        <begin position="1"/>
        <end position="393"/>
    </location>
</feature>
<feature type="topological domain" description="Cytoplasmic" evidence="2">
    <location>
        <begin position="1"/>
        <end position="10"/>
    </location>
</feature>
<feature type="transmembrane region" description="Helical" evidence="2">
    <location>
        <begin position="11"/>
        <end position="31"/>
    </location>
</feature>
<feature type="topological domain" description="Periplasmic" evidence="2">
    <location>
        <begin position="32"/>
        <end position="50"/>
    </location>
</feature>
<feature type="transmembrane region" description="Helical" evidence="2">
    <location>
        <begin position="51"/>
        <end position="71"/>
    </location>
</feature>
<feature type="topological domain" description="Cytoplasmic" evidence="2">
    <location>
        <begin position="72"/>
        <end position="77"/>
    </location>
</feature>
<feature type="transmembrane region" description="Helical" evidence="2">
    <location>
        <begin position="78"/>
        <end position="98"/>
    </location>
</feature>
<feature type="topological domain" description="Periplasmic" evidence="2">
    <location>
        <begin position="99"/>
        <end position="100"/>
    </location>
</feature>
<feature type="transmembrane region" description="Helical" evidence="2">
    <location>
        <begin position="101"/>
        <end position="121"/>
    </location>
</feature>
<feature type="topological domain" description="Cytoplasmic" evidence="2">
    <location>
        <begin position="122"/>
        <end position="133"/>
    </location>
</feature>
<feature type="transmembrane region" description="Helical" evidence="2">
    <location>
        <begin position="134"/>
        <end position="154"/>
    </location>
</feature>
<feature type="topological domain" description="Periplasmic" evidence="2">
    <location>
        <begin position="155"/>
        <end position="161"/>
    </location>
</feature>
<feature type="transmembrane region" description="Helical" evidence="2">
    <location>
        <begin position="162"/>
        <end position="182"/>
    </location>
</feature>
<feature type="topological domain" description="Cytoplasmic" evidence="2">
    <location>
        <begin position="183"/>
        <end position="205"/>
    </location>
</feature>
<feature type="transmembrane region" description="Helical" evidence="2">
    <location>
        <begin position="206"/>
        <end position="226"/>
    </location>
</feature>
<feature type="topological domain" description="Periplasmic" evidence="2">
    <location>
        <begin position="227"/>
        <end position="244"/>
    </location>
</feature>
<feature type="transmembrane region" description="Helical" evidence="2">
    <location>
        <begin position="245"/>
        <end position="265"/>
    </location>
</feature>
<feature type="topological domain" description="Cytoplasmic" evidence="2">
    <location>
        <begin position="266"/>
        <end position="272"/>
    </location>
</feature>
<feature type="transmembrane region" description="Helical" evidence="2">
    <location>
        <begin position="273"/>
        <end position="293"/>
    </location>
</feature>
<feature type="topological domain" description="Periplasmic" evidence="2">
    <location>
        <begin position="294"/>
        <end position="297"/>
    </location>
</feature>
<feature type="transmembrane region" description="Helical" evidence="2">
    <location>
        <begin position="298"/>
        <end position="318"/>
    </location>
</feature>
<feature type="topological domain" description="Cytoplasmic" evidence="2">
    <location>
        <begin position="319"/>
        <end position="331"/>
    </location>
</feature>
<feature type="transmembrane region" description="Helical" evidence="2">
    <location>
        <begin position="332"/>
        <end position="352"/>
    </location>
</feature>
<feature type="topological domain" description="Periplasmic" evidence="2">
    <location>
        <begin position="353"/>
        <end position="360"/>
    </location>
</feature>
<feature type="transmembrane region" description="Helical" evidence="2">
    <location>
        <begin position="361"/>
        <end position="381"/>
    </location>
</feature>
<feature type="topological domain" description="Cytoplasmic" evidence="2">
    <location>
        <begin position="382"/>
        <end position="393"/>
    </location>
</feature>
<feature type="sequence conflict" description="In Ref. 2; AAO71501." evidence="3" ref="2">
    <original>A</original>
    <variation>T</variation>
    <location>
        <position position="294"/>
    </location>
</feature>